<keyword id="KW-0965">Cell junction</keyword>
<keyword id="KW-1003">Cell membrane</keyword>
<keyword id="KW-0303">Gap junction</keyword>
<keyword id="KW-0472">Membrane</keyword>
<keyword id="KW-1185">Reference proteome</keyword>
<keyword id="KW-0812">Transmembrane</keyword>
<keyword id="KW-1133">Transmembrane helix</keyword>
<dbReference type="EMBL" id="AJ414561">
    <property type="protein sequence ID" value="CAC93843.1"/>
    <property type="molecule type" value="Genomic_DNA"/>
</dbReference>
<dbReference type="EMBL" id="AY166870">
    <property type="protein sequence ID" value="AAN65188.1"/>
    <property type="molecule type" value="Genomic_DNA"/>
</dbReference>
<dbReference type="EMBL" id="AL591067">
    <property type="status" value="NOT_ANNOTATED_CDS"/>
    <property type="molecule type" value="Genomic_DNA"/>
</dbReference>
<dbReference type="CCDS" id="CCDS25369.1"/>
<dbReference type="RefSeq" id="NP_848711.2">
    <property type="nucleotide sequence ID" value="NM_178596.3"/>
</dbReference>
<dbReference type="SMR" id="Q91YD1"/>
<dbReference type="BioGRID" id="237256">
    <property type="interactions" value="1"/>
</dbReference>
<dbReference type="FunCoup" id="Q91YD1">
    <property type="interactions" value="41"/>
</dbReference>
<dbReference type="STRING" id="10090.ENSMUSP00000055246"/>
<dbReference type="iPTMnet" id="Q91YD1"/>
<dbReference type="PhosphoSitePlus" id="Q91YD1"/>
<dbReference type="PaxDb" id="10090-ENSMUSP00000055246"/>
<dbReference type="Antibodypedia" id="51141">
    <property type="antibodies" value="30 antibodies from 12 providers"/>
</dbReference>
<dbReference type="DNASU" id="353155"/>
<dbReference type="Ensembl" id="ENSMUST00000062931.2">
    <property type="protein sequence ID" value="ENSMUSP00000055246.2"/>
    <property type="gene ID" value="ENSMUSG00000047197.2"/>
</dbReference>
<dbReference type="GeneID" id="353155"/>
<dbReference type="KEGG" id="mmu:353155"/>
<dbReference type="UCSC" id="uc007lib.1">
    <property type="organism name" value="mouse"/>
</dbReference>
<dbReference type="AGR" id="MGI:2384150"/>
<dbReference type="CTD" id="125111"/>
<dbReference type="MGI" id="MGI:2384150">
    <property type="gene designation" value="Gjd3"/>
</dbReference>
<dbReference type="VEuPathDB" id="HostDB:ENSMUSG00000047197"/>
<dbReference type="eggNOG" id="ENOG502R6H2">
    <property type="taxonomic scope" value="Eukaryota"/>
</dbReference>
<dbReference type="GeneTree" id="ENSGT01130000278276"/>
<dbReference type="HOGENOM" id="CLU_037388_4_2_1"/>
<dbReference type="InParanoid" id="Q91YD1"/>
<dbReference type="OMA" id="YSMHQAS"/>
<dbReference type="OrthoDB" id="10061722at2759"/>
<dbReference type="PhylomeDB" id="Q91YD1"/>
<dbReference type="TreeFam" id="TF329606"/>
<dbReference type="Reactome" id="R-MMU-190861">
    <property type="pathway name" value="Gap junction assembly"/>
</dbReference>
<dbReference type="BioGRID-ORCS" id="353155">
    <property type="hits" value="4 hits in 79 CRISPR screens"/>
</dbReference>
<dbReference type="ChiTaRS" id="Gjd3">
    <property type="organism name" value="mouse"/>
</dbReference>
<dbReference type="PRO" id="PR:Q91YD1"/>
<dbReference type="Proteomes" id="UP000000589">
    <property type="component" value="Chromosome 11"/>
</dbReference>
<dbReference type="RNAct" id="Q91YD1">
    <property type="molecule type" value="protein"/>
</dbReference>
<dbReference type="Bgee" id="ENSMUSG00000047197">
    <property type="expression patterns" value="Expressed in spermatocyte and 28 other cell types or tissues"/>
</dbReference>
<dbReference type="ExpressionAtlas" id="Q91YD1">
    <property type="expression patterns" value="baseline and differential"/>
</dbReference>
<dbReference type="GO" id="GO:0009986">
    <property type="term" value="C:cell surface"/>
    <property type="evidence" value="ECO:0000250"/>
    <property type="project" value="UniProtKB"/>
</dbReference>
<dbReference type="GO" id="GO:0005922">
    <property type="term" value="C:connexin complex"/>
    <property type="evidence" value="ECO:0000316"/>
    <property type="project" value="MGI"/>
</dbReference>
<dbReference type="GO" id="GO:0005921">
    <property type="term" value="C:gap junction"/>
    <property type="evidence" value="ECO:0000314"/>
    <property type="project" value="MGI"/>
</dbReference>
<dbReference type="GO" id="GO:0086077">
    <property type="term" value="F:gap junction channel activity involved in AV node cell-bundle of His cell electrical coupling"/>
    <property type="evidence" value="ECO:0000315"/>
    <property type="project" value="BHF-UCL"/>
</dbReference>
<dbReference type="GO" id="GO:0005216">
    <property type="term" value="F:monoatomic ion channel activity"/>
    <property type="evidence" value="ECO:0000314"/>
    <property type="project" value="MGI"/>
</dbReference>
<dbReference type="GO" id="GO:0086053">
    <property type="term" value="P:AV node cell to bundle of His cell communication by electrical coupling"/>
    <property type="evidence" value="ECO:0000315"/>
    <property type="project" value="BHF-UCL"/>
</dbReference>
<dbReference type="GO" id="GO:0016264">
    <property type="term" value="P:gap junction assembly"/>
    <property type="evidence" value="ECO:0000250"/>
    <property type="project" value="UniProtKB"/>
</dbReference>
<dbReference type="GO" id="GO:1903780">
    <property type="term" value="P:negative regulation of cardiac conduction"/>
    <property type="evidence" value="ECO:0000315"/>
    <property type="project" value="BHF-UCL"/>
</dbReference>
<dbReference type="GO" id="GO:1901845">
    <property type="term" value="P:negative regulation of cell communication by electrical coupling involved in cardiac conduction"/>
    <property type="evidence" value="ECO:0000315"/>
    <property type="project" value="BHF-UCL"/>
</dbReference>
<dbReference type="GO" id="GO:0010459">
    <property type="term" value="P:negative regulation of heart rate"/>
    <property type="evidence" value="ECO:0000315"/>
    <property type="project" value="BHF-UCL"/>
</dbReference>
<dbReference type="GO" id="GO:0009749">
    <property type="term" value="P:response to glucose"/>
    <property type="evidence" value="ECO:0007669"/>
    <property type="project" value="Ensembl"/>
</dbReference>
<dbReference type="FunFam" id="1.20.1440.80:FF:000005">
    <property type="entry name" value="Gap junction protein"/>
    <property type="match status" value="1"/>
</dbReference>
<dbReference type="Gene3D" id="1.20.1440.80">
    <property type="entry name" value="Gap junction channel protein cysteine-rich domain"/>
    <property type="match status" value="1"/>
</dbReference>
<dbReference type="InterPro" id="IPR000500">
    <property type="entry name" value="Connexin"/>
</dbReference>
<dbReference type="InterPro" id="IPR019570">
    <property type="entry name" value="Connexin_CCC"/>
</dbReference>
<dbReference type="InterPro" id="IPR017990">
    <property type="entry name" value="Connexin_CS"/>
</dbReference>
<dbReference type="InterPro" id="IPR013092">
    <property type="entry name" value="Connexin_N"/>
</dbReference>
<dbReference type="InterPro" id="IPR038359">
    <property type="entry name" value="Connexin_N_sf"/>
</dbReference>
<dbReference type="PANTHER" id="PTHR11984">
    <property type="entry name" value="CONNEXIN"/>
    <property type="match status" value="1"/>
</dbReference>
<dbReference type="PANTHER" id="PTHR11984:SF5">
    <property type="entry name" value="GAP JUNCTION DELTA-3 PROTEIN"/>
    <property type="match status" value="1"/>
</dbReference>
<dbReference type="Pfam" id="PF00029">
    <property type="entry name" value="Connexin"/>
    <property type="match status" value="1"/>
</dbReference>
<dbReference type="PRINTS" id="PR00206">
    <property type="entry name" value="CONNEXIN"/>
</dbReference>
<dbReference type="SMART" id="SM00037">
    <property type="entry name" value="CNX"/>
    <property type="match status" value="1"/>
</dbReference>
<dbReference type="SMART" id="SM01089">
    <property type="entry name" value="Connexin_CCC"/>
    <property type="match status" value="1"/>
</dbReference>
<dbReference type="PROSITE" id="PS00408">
    <property type="entry name" value="CONNEXINS_2"/>
    <property type="match status" value="1"/>
</dbReference>
<evidence type="ECO:0000250" key="1"/>
<evidence type="ECO:0000255" key="2"/>
<evidence type="ECO:0000256" key="3">
    <source>
        <dbReference type="SAM" id="MobiDB-lite"/>
    </source>
</evidence>
<evidence type="ECO:0000305" key="4"/>
<reference key="1">
    <citation type="journal article" date="2002" name="Biol. Chem.">
        <title>Structural and functional diversity of connexin genes in the mouse and human genome.</title>
        <authorList>
            <person name="Willecke K."/>
            <person name="Eiberger J."/>
            <person name="Degen J."/>
            <person name="Eckardt D."/>
            <person name="Romualdi A."/>
            <person name="Guldenagel M."/>
            <person name="Deutsch U."/>
            <person name="Soehl G."/>
        </authorList>
    </citation>
    <scope>NUCLEOTIDE SEQUENCE [GENOMIC DNA]</scope>
    <source>
        <strain>129/Sv</strain>
    </source>
</reference>
<reference key="2">
    <citation type="journal article" date="2003" name="FEBS Lett.">
        <title>Differences in expression patterns between mouse connexin-30.2 (Cx30.2) and its putative human orthologue, connexin-31.9.</title>
        <authorList>
            <person name="Nielsen P.A."/>
            <person name="Kumar N.M."/>
        </authorList>
    </citation>
    <scope>NUCLEOTIDE SEQUENCE [GENOMIC DNA]</scope>
    <source>
        <strain>129/Sv</strain>
    </source>
</reference>
<reference key="3">
    <citation type="journal article" date="2009" name="PLoS Biol.">
        <title>Lineage-specific biology revealed by a finished genome assembly of the mouse.</title>
        <authorList>
            <person name="Church D.M."/>
            <person name="Goodstadt L."/>
            <person name="Hillier L.W."/>
            <person name="Zody M.C."/>
            <person name="Goldstein S."/>
            <person name="She X."/>
            <person name="Bult C.J."/>
            <person name="Agarwala R."/>
            <person name="Cherry J.L."/>
            <person name="DiCuccio M."/>
            <person name="Hlavina W."/>
            <person name="Kapustin Y."/>
            <person name="Meric P."/>
            <person name="Maglott D."/>
            <person name="Birtle Z."/>
            <person name="Marques A.C."/>
            <person name="Graves T."/>
            <person name="Zhou S."/>
            <person name="Teague B."/>
            <person name="Potamousis K."/>
            <person name="Churas C."/>
            <person name="Place M."/>
            <person name="Herschleb J."/>
            <person name="Runnheim R."/>
            <person name="Forrest D."/>
            <person name="Amos-Landgraf J."/>
            <person name="Schwartz D.C."/>
            <person name="Cheng Z."/>
            <person name="Lindblad-Toh K."/>
            <person name="Eichler E.E."/>
            <person name="Ponting C.P."/>
        </authorList>
    </citation>
    <scope>NUCLEOTIDE SEQUENCE [LARGE SCALE GENOMIC DNA]</scope>
    <source>
        <strain>C57BL/6J</strain>
    </source>
</reference>
<accession>Q91YD1</accession>
<accession>Q80ZH0</accession>
<sequence>MGEWAFLGSLLDAVQLQSPLVGRLWLVIMLIFRILVLATVGGAVFEDEQEEFVCNTLQPGCRQTCYDRAFPVSHYRFWLFHILLLSAPPVLFVIYSMHQASKEAGGAQLAPPCARGRAEAPCSPCALRARRARRCYLLSVALRLLAELAFLGGQALLYGFRVDPHYACAGPPCPHTVDCFVSRPTEKTVFVVFYFAVGLLSALLSVAELGHLLWKGRQRAKLLPPPPPSPSLPSQRGDPDPFGPPAYAHRSPAGDSEGEGGSGHSKASLATVRQDLAI</sequence>
<organism>
    <name type="scientific">Mus musculus</name>
    <name type="common">Mouse</name>
    <dbReference type="NCBI Taxonomy" id="10090"/>
    <lineage>
        <taxon>Eukaryota</taxon>
        <taxon>Metazoa</taxon>
        <taxon>Chordata</taxon>
        <taxon>Craniata</taxon>
        <taxon>Vertebrata</taxon>
        <taxon>Euteleostomi</taxon>
        <taxon>Mammalia</taxon>
        <taxon>Eutheria</taxon>
        <taxon>Euarchontoglires</taxon>
        <taxon>Glires</taxon>
        <taxon>Rodentia</taxon>
        <taxon>Myomorpha</taxon>
        <taxon>Muroidea</taxon>
        <taxon>Muridae</taxon>
        <taxon>Murinae</taxon>
        <taxon>Mus</taxon>
        <taxon>Mus</taxon>
    </lineage>
</organism>
<gene>
    <name type="primary">Gjd3</name>
    <name type="synonym">Gja11</name>
    <name type="synonym">Gjc1</name>
</gene>
<proteinExistence type="inferred from homology"/>
<comment type="function">
    <text evidence="1">One gap junction consists of a cluster of closely packed pairs of transmembrane channels, the connexons, through which materials of low MW diffuse from one cell to a neighboring cell.</text>
</comment>
<comment type="subunit">
    <text evidence="1">A connexon is composed of a hexamer of connexins.</text>
</comment>
<comment type="subcellular location">
    <subcellularLocation>
        <location evidence="1">Cell membrane</location>
        <topology evidence="1">Multi-pass membrane protein</topology>
    </subcellularLocation>
    <subcellularLocation>
        <location evidence="1">Cell junction</location>
        <location evidence="1">Gap junction</location>
    </subcellularLocation>
</comment>
<comment type="similarity">
    <text evidence="4">Belongs to the connexin family. Delta-type subfamily.</text>
</comment>
<protein>
    <recommendedName>
        <fullName>Gap junction delta-3 protein</fullName>
    </recommendedName>
    <alternativeName>
        <fullName>Connexin-30.2</fullName>
        <shortName>Cx30.2</shortName>
    </alternativeName>
    <alternativeName>
        <fullName>Gap junction alpha-11 protein</fullName>
    </alternativeName>
    <alternativeName>
        <fullName>Gap junction chi-1 protein</fullName>
    </alternativeName>
</protein>
<feature type="chain" id="PRO_0000313009" description="Gap junction delta-3 protein">
    <location>
        <begin position="1"/>
        <end position="278"/>
    </location>
</feature>
<feature type="topological domain" description="Cytoplasmic" evidence="2">
    <location>
        <begin position="1"/>
        <end position="24"/>
    </location>
</feature>
<feature type="transmembrane region" description="Helical" evidence="2">
    <location>
        <begin position="25"/>
        <end position="45"/>
    </location>
</feature>
<feature type="topological domain" description="Extracellular" evidence="2">
    <location>
        <begin position="46"/>
        <end position="76"/>
    </location>
</feature>
<feature type="transmembrane region" description="Helical" evidence="2">
    <location>
        <begin position="77"/>
        <end position="97"/>
    </location>
</feature>
<feature type="topological domain" description="Cytoplasmic" evidence="2">
    <location>
        <begin position="98"/>
        <end position="136"/>
    </location>
</feature>
<feature type="transmembrane region" description="Helical" evidence="2">
    <location>
        <begin position="137"/>
        <end position="157"/>
    </location>
</feature>
<feature type="topological domain" description="Extracellular" evidence="2">
    <location>
        <begin position="158"/>
        <end position="188"/>
    </location>
</feature>
<feature type="transmembrane region" description="Helical" evidence="2">
    <location>
        <begin position="189"/>
        <end position="209"/>
    </location>
</feature>
<feature type="topological domain" description="Cytoplasmic" evidence="2">
    <location>
        <begin position="210"/>
        <end position="278"/>
    </location>
</feature>
<feature type="region of interest" description="Disordered" evidence="3">
    <location>
        <begin position="223"/>
        <end position="278"/>
    </location>
</feature>
<feature type="sequence conflict" description="In Ref. 2; AAN65188." evidence="4" ref="2">
    <original>AVQL</original>
    <variation>PLQV</variation>
    <location>
        <begin position="13"/>
        <end position="16"/>
    </location>
</feature>
<feature type="sequence conflict" description="In Ref. 2; AAN65188." evidence="4" ref="2">
    <original>A</original>
    <variation>S</variation>
    <location>
        <position position="43"/>
    </location>
</feature>
<name>CXD3_MOUSE</name>